<sequence>MLSAAEGILLSIATVEAGLGVLGNTFIALVNCMDWAKNNKLSMTGFLLIGLATSRIFIVWLLTLDAYAKLFYPSKYFSSSLIEIISYIWMTVNHLTVWFATSLSIFYFLKIANFSDCVFLWLKRRTDKAFVFLLGCLLTSWVISFSFVVKVMKDGKVNHRNRTSEMYWEKRQFTINYVFLNIGVISLFMMTLTACFLLIMSLWRHSRQMQSGVSGFRDLNTEAHVKAIKFLISFIILFVLYFIGVSIEIICIFIPENKLLFIFGFTTASIYPCCHSFILILSNSQLKQAFVKVLQGLKFF</sequence>
<accession>Q9JKT4</accession>
<protein>
    <recommendedName>
        <fullName>Taste receptor type 2 member 105</fullName>
        <shortName>T2R105</shortName>
    </recommendedName>
    <alternativeName>
        <fullName>Taste receptor type 2 member 5</fullName>
        <shortName>T2R5</shortName>
    </alternativeName>
    <alternativeName>
        <fullName>Taste receptor type 2 member 9</fullName>
        <shortName>T2R9</shortName>
    </alternativeName>
</protein>
<name>TR105_MOUSE</name>
<gene>
    <name type="primary">Tas2r105</name>
    <name type="synonym">Tas2r5</name>
    <name type="synonym">Tas2r9</name>
</gene>
<dbReference type="EMBL" id="AF227147">
    <property type="protein sequence ID" value="AAF43920.1"/>
    <property type="molecule type" value="Genomic_DNA"/>
</dbReference>
<dbReference type="CCDS" id="CCDS20612.1"/>
<dbReference type="RefSeq" id="NP_065247.1">
    <property type="nucleotide sequence ID" value="NM_020501.1"/>
</dbReference>
<dbReference type="SMR" id="Q9JKT4"/>
<dbReference type="FunCoup" id="Q9JKT4">
    <property type="interactions" value="88"/>
</dbReference>
<dbReference type="STRING" id="10090.ENSMUSP00000058006"/>
<dbReference type="ChEMBL" id="CHEMBL3714703"/>
<dbReference type="GlyCosmos" id="Q9JKT4">
    <property type="glycosylation" value="1 site, No reported glycans"/>
</dbReference>
<dbReference type="GlyGen" id="Q9JKT4">
    <property type="glycosylation" value="1 site"/>
</dbReference>
<dbReference type="PaxDb" id="10090-ENSMUSP00000058006"/>
<dbReference type="DNASU" id="57252"/>
<dbReference type="Ensembl" id="ENSMUST00000053652.6">
    <property type="protein sequence ID" value="ENSMUSP00000058006.5"/>
    <property type="gene ID" value="ENSMUSG00000051153.6"/>
</dbReference>
<dbReference type="GeneID" id="57252"/>
<dbReference type="KEGG" id="mmu:57252"/>
<dbReference type="UCSC" id="uc009eiz.1">
    <property type="organism name" value="mouse"/>
</dbReference>
<dbReference type="AGR" id="MGI:2681195"/>
<dbReference type="CTD" id="57252"/>
<dbReference type="MGI" id="MGI:2681195">
    <property type="gene designation" value="Tas2r105"/>
</dbReference>
<dbReference type="VEuPathDB" id="HostDB:ENSMUSG00000051153"/>
<dbReference type="eggNOG" id="ENOG502T3AX">
    <property type="taxonomic scope" value="Eukaryota"/>
</dbReference>
<dbReference type="GeneTree" id="ENSGT01100000263477"/>
<dbReference type="HOGENOM" id="CLU_072337_3_0_1"/>
<dbReference type="InParanoid" id="Q9JKT4"/>
<dbReference type="OMA" id="SRIFIVW"/>
<dbReference type="OrthoDB" id="8876749at2759"/>
<dbReference type="PhylomeDB" id="Q9JKT4"/>
<dbReference type="TreeFam" id="TF335891"/>
<dbReference type="BioGRID-ORCS" id="57252">
    <property type="hits" value="1 hit in 77 CRISPR screens"/>
</dbReference>
<dbReference type="PRO" id="PR:Q9JKT4"/>
<dbReference type="Proteomes" id="UP000000589">
    <property type="component" value="Chromosome 6"/>
</dbReference>
<dbReference type="RNAct" id="Q9JKT4">
    <property type="molecule type" value="protein"/>
</dbReference>
<dbReference type="Bgee" id="ENSMUSG00000051153">
    <property type="expression patterns" value="Expressed in lumbar dorsal root ganglion and 16 other cell types or tissues"/>
</dbReference>
<dbReference type="ExpressionAtlas" id="Q9JKT4">
    <property type="expression patterns" value="differential"/>
</dbReference>
<dbReference type="GO" id="GO:0016020">
    <property type="term" value="C:membrane"/>
    <property type="evidence" value="ECO:0007669"/>
    <property type="project" value="UniProtKB-SubCell"/>
</dbReference>
<dbReference type="GO" id="GO:0033038">
    <property type="term" value="F:bitter taste receptor activity"/>
    <property type="evidence" value="ECO:0007669"/>
    <property type="project" value="InterPro"/>
</dbReference>
<dbReference type="GO" id="GO:0004930">
    <property type="term" value="F:G protein-coupled receptor activity"/>
    <property type="evidence" value="ECO:0007669"/>
    <property type="project" value="UniProtKB-KW"/>
</dbReference>
<dbReference type="GO" id="GO:0008527">
    <property type="term" value="F:taste receptor activity"/>
    <property type="evidence" value="ECO:0000304"/>
    <property type="project" value="UniProtKB"/>
</dbReference>
<dbReference type="GO" id="GO:0050913">
    <property type="term" value="P:sensory perception of bitter taste"/>
    <property type="evidence" value="ECO:0000315"/>
    <property type="project" value="MGI"/>
</dbReference>
<dbReference type="CDD" id="cd15021">
    <property type="entry name" value="7tm_TAS2R10"/>
    <property type="match status" value="1"/>
</dbReference>
<dbReference type="FunFam" id="1.20.1070.10:FF:000042">
    <property type="entry name" value="Taste receptor type 2 member 7"/>
    <property type="match status" value="1"/>
</dbReference>
<dbReference type="Gene3D" id="1.20.1070.10">
    <property type="entry name" value="Rhodopsin 7-helix transmembrane proteins"/>
    <property type="match status" value="1"/>
</dbReference>
<dbReference type="InterPro" id="IPR007960">
    <property type="entry name" value="TAS2R"/>
</dbReference>
<dbReference type="PANTHER" id="PTHR11394">
    <property type="entry name" value="TASTE RECEPTOR TYPE 2"/>
    <property type="match status" value="1"/>
</dbReference>
<dbReference type="PANTHER" id="PTHR11394:SF132">
    <property type="entry name" value="TASTE RECEPTOR TYPE 2 MEMBER 105"/>
    <property type="match status" value="1"/>
</dbReference>
<dbReference type="Pfam" id="PF05296">
    <property type="entry name" value="TAS2R"/>
    <property type="match status" value="1"/>
</dbReference>
<dbReference type="SUPFAM" id="SSF81321">
    <property type="entry name" value="Family A G protein-coupled receptor-like"/>
    <property type="match status" value="1"/>
</dbReference>
<organism>
    <name type="scientific">Mus musculus</name>
    <name type="common">Mouse</name>
    <dbReference type="NCBI Taxonomy" id="10090"/>
    <lineage>
        <taxon>Eukaryota</taxon>
        <taxon>Metazoa</taxon>
        <taxon>Chordata</taxon>
        <taxon>Craniata</taxon>
        <taxon>Vertebrata</taxon>
        <taxon>Euteleostomi</taxon>
        <taxon>Mammalia</taxon>
        <taxon>Eutheria</taxon>
        <taxon>Euarchontoglires</taxon>
        <taxon>Glires</taxon>
        <taxon>Rodentia</taxon>
        <taxon>Myomorpha</taxon>
        <taxon>Muroidea</taxon>
        <taxon>Muridae</taxon>
        <taxon>Murinae</taxon>
        <taxon>Mus</taxon>
        <taxon>Mus</taxon>
    </lineage>
</organism>
<feature type="chain" id="PRO_0000082359" description="Taste receptor type 2 member 105">
    <location>
        <begin position="1"/>
        <end position="300"/>
    </location>
</feature>
<feature type="topological domain" description="Extracellular" evidence="1">
    <location>
        <begin position="1"/>
        <end position="7"/>
    </location>
</feature>
<feature type="transmembrane region" description="Helical; Name=1" evidence="1">
    <location>
        <begin position="8"/>
        <end position="28"/>
    </location>
</feature>
<feature type="topological domain" description="Cytoplasmic" evidence="1">
    <location>
        <begin position="29"/>
        <end position="43"/>
    </location>
</feature>
<feature type="transmembrane region" description="Helical; Name=2" evidence="1">
    <location>
        <begin position="44"/>
        <end position="64"/>
    </location>
</feature>
<feature type="topological domain" description="Extracellular" evidence="1">
    <location>
        <begin position="65"/>
        <end position="87"/>
    </location>
</feature>
<feature type="transmembrane region" description="Helical; Name=3" evidence="1">
    <location>
        <begin position="88"/>
        <end position="108"/>
    </location>
</feature>
<feature type="topological domain" description="Cytoplasmic" evidence="1">
    <location>
        <begin position="109"/>
        <end position="128"/>
    </location>
</feature>
<feature type="transmembrane region" description="Helical; Name=4" evidence="1">
    <location>
        <begin position="129"/>
        <end position="149"/>
    </location>
</feature>
<feature type="topological domain" description="Extracellular" evidence="1">
    <location>
        <begin position="150"/>
        <end position="181"/>
    </location>
</feature>
<feature type="transmembrane region" description="Helical; Name=5" evidence="1">
    <location>
        <begin position="182"/>
        <end position="202"/>
    </location>
</feature>
<feature type="topological domain" description="Cytoplasmic" evidence="1">
    <location>
        <begin position="203"/>
        <end position="233"/>
    </location>
</feature>
<feature type="transmembrane region" description="Helical; Name=6" evidence="1">
    <location>
        <begin position="234"/>
        <end position="254"/>
    </location>
</feature>
<feature type="topological domain" description="Extracellular" evidence="1">
    <location>
        <begin position="255"/>
        <end position="259"/>
    </location>
</feature>
<feature type="transmembrane region" description="Helical; Name=7" evidence="1">
    <location>
        <begin position="260"/>
        <end position="280"/>
    </location>
</feature>
<feature type="topological domain" description="Cytoplasmic" evidence="1">
    <location>
        <begin position="281"/>
        <end position="300"/>
    </location>
</feature>
<feature type="glycosylation site" description="N-linked (GlcNAc...) asparagine" evidence="1">
    <location>
        <position position="161"/>
    </location>
</feature>
<feature type="sequence variant" description="In strain: BALB/c, C3H/He, CBA/Ca and DBA/2J." evidence="2">
    <original>T</original>
    <variation>I</variation>
    <location>
        <position position="44"/>
    </location>
</feature>
<feature type="sequence variant" description="In strain: BALB/c, C3H/He, CBA/Ca and DBA/2J." evidence="2">
    <original>G</original>
    <variation>D</variation>
    <location>
        <position position="155"/>
    </location>
</feature>
<feature type="sequence variant" description="In strain: BALB/c, C3H/He, CBA/Ca and DBA/2J." evidence="2">
    <original>L</original>
    <variation>R</variation>
    <location>
        <position position="294"/>
    </location>
</feature>
<evidence type="ECO:0000255" key="1"/>
<evidence type="ECO:0000269" key="2">
    <source>
    </source>
</evidence>
<evidence type="ECO:0000269" key="3">
    <source>
    </source>
</evidence>
<evidence type="ECO:0000305" key="4"/>
<reference key="1">
    <citation type="journal article" date="2000" name="Cell">
        <title>A novel family of mammalian taste receptors.</title>
        <authorList>
            <person name="Adler E."/>
            <person name="Hoon M.A."/>
            <person name="Mueller K.L."/>
            <person name="Chandrashekar J."/>
            <person name="Ryba N.J.P."/>
            <person name="Zuker C.S."/>
        </authorList>
    </citation>
    <scope>NUCLEOTIDE SEQUENCE [GENOMIC DNA]</scope>
    <scope>TOPOLOGY</scope>
    <source>
        <strain>129/SvJ</strain>
    </source>
</reference>
<reference key="2">
    <citation type="journal article" date="2000" name="Cell">
        <title>T2Rs function as bitter taste receptors.</title>
        <authorList>
            <person name="Chandrashekar J."/>
            <person name="Mueller K.L."/>
            <person name="Hoon M.A."/>
            <person name="Adler E."/>
            <person name="Feng L."/>
            <person name="Guo W."/>
            <person name="Zuker C.S."/>
            <person name="Ryba N.J.P."/>
        </authorList>
    </citation>
    <scope>FUNCTION</scope>
    <scope>VARIANTS ILE-44; ASP-155 AND ARG-294</scope>
    <scope>POLYMORPHISM</scope>
</reference>
<reference key="3">
    <citation type="journal article" date="2005" name="Nature">
        <title>The receptors and coding logic for bitter taste.</title>
        <authorList>
            <person name="Mueller K.L."/>
            <person name="Hoon M.A."/>
            <person name="Erlenbach I."/>
            <person name="Chandrashekar J."/>
            <person name="Zuker C.S."/>
            <person name="Ryba N.J."/>
        </authorList>
    </citation>
    <scope>FUNCTION</scope>
    <scope>DISRUPTION PHENOTYPE</scope>
</reference>
<reference key="4">
    <citation type="journal article" date="2002" name="Curr. Opin. Neurobiol.">
        <title>Receptors for bitter and sweet taste.</title>
        <authorList>
            <person name="Montmayeur J.-P."/>
            <person name="Matsunami H."/>
        </authorList>
    </citation>
    <scope>REVIEW</scope>
</reference>
<reference key="5">
    <citation type="journal article" date="2002" name="J. Biol. Chem.">
        <title>Molecular mechanisms of bitter and sweet taste transduction.</title>
        <authorList>
            <person name="Margolskee R.F."/>
        </authorList>
    </citation>
    <scope>REVIEW</scope>
</reference>
<reference key="6">
    <citation type="journal article" date="2003" name="Cell">
        <title>Coding of sweet, bitter, and umami tastes: different receptor cells sharing similar signaling pathways.</title>
        <authorList>
            <person name="Zhang Y."/>
            <person name="Hoon M.A."/>
            <person name="Chandrashekar J."/>
            <person name="Mueller K.L."/>
            <person name="Cook B."/>
            <person name="Wu D."/>
            <person name="Zuker C.S."/>
            <person name="Ryba N.J."/>
        </authorList>
    </citation>
    <scope>REVIEW</scope>
</reference>
<proteinExistence type="evidence at protein level"/>
<keyword id="KW-0297">G-protein coupled receptor</keyword>
<keyword id="KW-0325">Glycoprotein</keyword>
<keyword id="KW-0472">Membrane</keyword>
<keyword id="KW-0675">Receptor</keyword>
<keyword id="KW-1185">Reference proteome</keyword>
<keyword id="KW-0716">Sensory transduction</keyword>
<keyword id="KW-0919">Taste</keyword>
<keyword id="KW-0807">Transducer</keyword>
<keyword id="KW-0812">Transmembrane</keyword>
<keyword id="KW-1133">Transmembrane helix</keyword>
<comment type="function">
    <text evidence="2 3">Gustducin-coupled cycloheximide receptor implicated in the perception of bitter compounds in the oral cavity and the gastrointestinal tract. Signals through PLCB2 and the calcium-regulated cation channel TRPM5.</text>
</comment>
<comment type="subcellular location">
    <subcellularLocation>
        <location>Membrane</location>
        <topology>Multi-pass membrane protein</topology>
    </subcellularLocation>
</comment>
<comment type="tissue specificity">
    <text>Expressed in subsets of taste receptor cells of the tongue and palate epithelium and exclusively in gustducin-positive cells. Expressed in gastric and duodenal tissues.</text>
</comment>
<comment type="polymorphism">
    <text evidence="2">Variations in Tas2r105 are associated with avoidance of cycloheximide at low concentrations.</text>
</comment>
<comment type="disruption phenotype">
    <text evidence="3">Mice fail to avoid cycloheximide at low concentrations and show a lack of cycloheximide-induced action potentials in a principal nerve innervating taste receptor cells of the tongue.</text>
</comment>
<comment type="miscellaneous">
    <text>Several bitter taste receptors are expressed in a single taste receptor cell.</text>
</comment>
<comment type="similarity">
    <text evidence="4">Belongs to the G-protein coupled receptor T2R family.</text>
</comment>